<reference key="1">
    <citation type="submission" date="2007-11" db="EMBL/GenBank/DDBJ databases">
        <authorList>
            <consortium name="The Salmonella enterica serovar Paratyphi B Genome Sequencing Project"/>
            <person name="McClelland M."/>
            <person name="Sanderson E.K."/>
            <person name="Porwollik S."/>
            <person name="Spieth J."/>
            <person name="Clifton W.S."/>
            <person name="Fulton R."/>
            <person name="Cordes M."/>
            <person name="Wollam A."/>
            <person name="Shah N."/>
            <person name="Pepin K."/>
            <person name="Bhonagiri V."/>
            <person name="Nash W."/>
            <person name="Johnson M."/>
            <person name="Thiruvilangam P."/>
            <person name="Wilson R."/>
        </authorList>
    </citation>
    <scope>NUCLEOTIDE SEQUENCE [LARGE SCALE GENOMIC DNA]</scope>
    <source>
        <strain>ATCC BAA-1250 / SPB7</strain>
    </source>
</reference>
<sequence>MSDDVALPLQFTDAAANKVKSLIADEDNPNLKLRVYITGGGCSGFQYGFTFDDQVNEGDMTIEKQGVGLVVDPMSLQYLVGGSVDYTEGLEGSRFIVTNPNAKSTCGCGSSFSI</sequence>
<dbReference type="EMBL" id="CP000886">
    <property type="protein sequence ID" value="ABX65704.1"/>
    <property type="molecule type" value="Genomic_DNA"/>
</dbReference>
<dbReference type="RefSeq" id="WP_001278668.1">
    <property type="nucleotide sequence ID" value="NC_010102.1"/>
</dbReference>
<dbReference type="SMR" id="A9N0Q2"/>
<dbReference type="GeneID" id="66754727"/>
<dbReference type="KEGG" id="spq:SPAB_00262"/>
<dbReference type="PATRIC" id="fig|1016998.12.peg.254"/>
<dbReference type="HOGENOM" id="CLU_069054_5_3_6"/>
<dbReference type="BioCyc" id="SENT1016998:SPAB_RS01060-MONOMER"/>
<dbReference type="Proteomes" id="UP000008556">
    <property type="component" value="Chromosome"/>
</dbReference>
<dbReference type="GO" id="GO:0005829">
    <property type="term" value="C:cytosol"/>
    <property type="evidence" value="ECO:0007669"/>
    <property type="project" value="TreeGrafter"/>
</dbReference>
<dbReference type="GO" id="GO:0051537">
    <property type="term" value="F:2 iron, 2 sulfur cluster binding"/>
    <property type="evidence" value="ECO:0007669"/>
    <property type="project" value="TreeGrafter"/>
</dbReference>
<dbReference type="GO" id="GO:0051539">
    <property type="term" value="F:4 iron, 4 sulfur cluster binding"/>
    <property type="evidence" value="ECO:0007669"/>
    <property type="project" value="TreeGrafter"/>
</dbReference>
<dbReference type="GO" id="GO:0005506">
    <property type="term" value="F:iron ion binding"/>
    <property type="evidence" value="ECO:0007669"/>
    <property type="project" value="UniProtKB-UniRule"/>
</dbReference>
<dbReference type="GO" id="GO:0016226">
    <property type="term" value="P:iron-sulfur cluster assembly"/>
    <property type="evidence" value="ECO:0007669"/>
    <property type="project" value="UniProtKB-UniRule"/>
</dbReference>
<dbReference type="FunFam" id="2.60.300.12:FF:000002">
    <property type="entry name" value="Iron-sulfur cluster insertion protein ErpA"/>
    <property type="match status" value="1"/>
</dbReference>
<dbReference type="Gene3D" id="2.60.300.12">
    <property type="entry name" value="HesB-like domain"/>
    <property type="match status" value="1"/>
</dbReference>
<dbReference type="HAMAP" id="MF_01380">
    <property type="entry name" value="Fe_S_insert_ErpA"/>
    <property type="match status" value="1"/>
</dbReference>
<dbReference type="InterPro" id="IPR000361">
    <property type="entry name" value="FeS_biogenesis"/>
</dbReference>
<dbReference type="InterPro" id="IPR016092">
    <property type="entry name" value="FeS_cluster_insertion"/>
</dbReference>
<dbReference type="InterPro" id="IPR017870">
    <property type="entry name" value="FeS_cluster_insertion_CS"/>
</dbReference>
<dbReference type="InterPro" id="IPR023063">
    <property type="entry name" value="FeS_cluster_insertion_RrpA"/>
</dbReference>
<dbReference type="InterPro" id="IPR035903">
    <property type="entry name" value="HesB-like_dom_sf"/>
</dbReference>
<dbReference type="NCBIfam" id="TIGR00049">
    <property type="entry name" value="iron-sulfur cluster assembly accessory protein"/>
    <property type="match status" value="1"/>
</dbReference>
<dbReference type="NCBIfam" id="NF010147">
    <property type="entry name" value="PRK13623.1"/>
    <property type="match status" value="1"/>
</dbReference>
<dbReference type="PANTHER" id="PTHR43011">
    <property type="entry name" value="IRON-SULFUR CLUSTER ASSEMBLY 2 HOMOLOG, MITOCHONDRIAL"/>
    <property type="match status" value="1"/>
</dbReference>
<dbReference type="PANTHER" id="PTHR43011:SF1">
    <property type="entry name" value="IRON-SULFUR CLUSTER ASSEMBLY 2 HOMOLOG, MITOCHONDRIAL"/>
    <property type="match status" value="1"/>
</dbReference>
<dbReference type="Pfam" id="PF01521">
    <property type="entry name" value="Fe-S_biosyn"/>
    <property type="match status" value="1"/>
</dbReference>
<dbReference type="SUPFAM" id="SSF89360">
    <property type="entry name" value="HesB-like domain"/>
    <property type="match status" value="1"/>
</dbReference>
<dbReference type="PROSITE" id="PS01152">
    <property type="entry name" value="HESB"/>
    <property type="match status" value="1"/>
</dbReference>
<comment type="function">
    <text evidence="1">Required for insertion of 4Fe-4S clusters for at least IspG.</text>
</comment>
<comment type="cofactor">
    <cofactor evidence="1">
        <name>iron-sulfur cluster</name>
        <dbReference type="ChEBI" id="CHEBI:30408"/>
    </cofactor>
    <text evidence="1">Binds 1 iron-sulfur cluster per subunit.</text>
</comment>
<comment type="subunit">
    <text evidence="1">Homodimer.</text>
</comment>
<comment type="similarity">
    <text evidence="1">Belongs to the HesB/IscA family.</text>
</comment>
<gene>
    <name evidence="1" type="primary">erpA</name>
    <name type="ordered locus">SPAB_00262</name>
</gene>
<organism>
    <name type="scientific">Salmonella paratyphi B (strain ATCC BAA-1250 / SPB7)</name>
    <dbReference type="NCBI Taxonomy" id="1016998"/>
    <lineage>
        <taxon>Bacteria</taxon>
        <taxon>Pseudomonadati</taxon>
        <taxon>Pseudomonadota</taxon>
        <taxon>Gammaproteobacteria</taxon>
        <taxon>Enterobacterales</taxon>
        <taxon>Enterobacteriaceae</taxon>
        <taxon>Salmonella</taxon>
    </lineage>
</organism>
<keyword id="KW-0408">Iron</keyword>
<keyword id="KW-0411">Iron-sulfur</keyword>
<keyword id="KW-0479">Metal-binding</keyword>
<accession>A9N0Q2</accession>
<proteinExistence type="inferred from homology"/>
<evidence type="ECO:0000255" key="1">
    <source>
        <dbReference type="HAMAP-Rule" id="MF_01380"/>
    </source>
</evidence>
<name>ERPA_SALPB</name>
<feature type="chain" id="PRO_1000144934" description="Iron-sulfur cluster insertion protein ErpA">
    <location>
        <begin position="1"/>
        <end position="114"/>
    </location>
</feature>
<feature type="binding site" evidence="1">
    <location>
        <position position="42"/>
    </location>
    <ligand>
        <name>iron-sulfur cluster</name>
        <dbReference type="ChEBI" id="CHEBI:30408"/>
    </ligand>
</feature>
<feature type="binding site" evidence="1">
    <location>
        <position position="106"/>
    </location>
    <ligand>
        <name>iron-sulfur cluster</name>
        <dbReference type="ChEBI" id="CHEBI:30408"/>
    </ligand>
</feature>
<feature type="binding site" evidence="1">
    <location>
        <position position="108"/>
    </location>
    <ligand>
        <name>iron-sulfur cluster</name>
        <dbReference type="ChEBI" id="CHEBI:30408"/>
    </ligand>
</feature>
<protein>
    <recommendedName>
        <fullName evidence="1">Iron-sulfur cluster insertion protein ErpA</fullName>
    </recommendedName>
</protein>